<gene>
    <name type="primary">fliC</name>
</gene>
<sequence length="505" mass="52977">MAQVINTNSLSLLTQNNLNKSQSSLSSAIERLSSGLRINSAKDDAAGQAIANRFTSNIKGLTQASRNANDGISIAQTTEGALNEINNNLQRVRELSVQATNGTNSDSDLKSIQDEIQQRLEEIDRVSNQTQFNGVKVLSQDNQMKIQVGANDGETITIDLQKIDVKSLGLDGFNVNGPKEATVGDLKSSFKNVTGYDTYAAGADKYRVDINSGAVVTDAVAPDKVYVNAANGQLTTDDAENNTAVDLFKTTKSTAGTAEAKAIAGAIKGGKEGDTFDYKGVTFTIDTKTGDDGNGKVSTTINGEKVTLTVADIGIGAADVNAATLQSSKNVYTSVVNGQFTFDDKTKNESAKLSDLEANNAVKGESKITVNGAEYTANATGDKITLAGKTMFIDKTASGVSTLINEDAAAAKKSTANPLASIDSALSKVDAVRSSLGAIQNRFDSAITNLGNTVTNLNSARSRIEDADYATEVSNMSKAQILQQAGTSVLAQANQVPQNVLSLLR</sequence>
<name>FLIC_SALRO</name>
<protein>
    <recommendedName>
        <fullName>Flagellin</fullName>
    </recommendedName>
    <alternativeName>
        <fullName>Phase 1-C flagellin</fullName>
    </alternativeName>
</protein>
<dbReference type="EMBL" id="Z15071">
    <property type="protein sequence ID" value="CAA78780.1"/>
    <property type="molecule type" value="Genomic_DNA"/>
</dbReference>
<dbReference type="PIR" id="S33193">
    <property type="entry name" value="S33193"/>
</dbReference>
<dbReference type="SMR" id="Q06982"/>
<dbReference type="GO" id="GO:0009288">
    <property type="term" value="C:bacterial-type flagellum"/>
    <property type="evidence" value="ECO:0007669"/>
    <property type="project" value="UniProtKB-SubCell"/>
</dbReference>
<dbReference type="GO" id="GO:0005576">
    <property type="term" value="C:extracellular region"/>
    <property type="evidence" value="ECO:0007669"/>
    <property type="project" value="UniProtKB-SubCell"/>
</dbReference>
<dbReference type="GO" id="GO:0005198">
    <property type="term" value="F:structural molecule activity"/>
    <property type="evidence" value="ECO:0007669"/>
    <property type="project" value="InterPro"/>
</dbReference>
<dbReference type="Gene3D" id="6.10.280.190">
    <property type="match status" value="1"/>
</dbReference>
<dbReference type="Gene3D" id="2.30.220.10">
    <property type="entry name" value="f41 fragment of flagellin, C-terminal domain"/>
    <property type="match status" value="1"/>
</dbReference>
<dbReference type="Gene3D" id="2.170.280.10">
    <property type="entry name" value="f41 fragment of flagellin, middle domain"/>
    <property type="match status" value="1"/>
</dbReference>
<dbReference type="Gene3D" id="1.20.1330.10">
    <property type="entry name" value="f41 fragment of flagellin, N-terminal domain"/>
    <property type="match status" value="1"/>
</dbReference>
<dbReference type="Gene3D" id="6.10.10.10">
    <property type="entry name" value="Flagellar export chaperone, C-terminal domain"/>
    <property type="match status" value="1"/>
</dbReference>
<dbReference type="InterPro" id="IPR001492">
    <property type="entry name" value="Flagellin"/>
</dbReference>
<dbReference type="InterPro" id="IPR046358">
    <property type="entry name" value="Flagellin_C"/>
</dbReference>
<dbReference type="InterPro" id="IPR042187">
    <property type="entry name" value="Flagellin_C_sub2"/>
</dbReference>
<dbReference type="InterPro" id="IPR001029">
    <property type="entry name" value="Flagellin_N"/>
</dbReference>
<dbReference type="PANTHER" id="PTHR42792">
    <property type="entry name" value="FLAGELLIN"/>
    <property type="match status" value="1"/>
</dbReference>
<dbReference type="PANTHER" id="PTHR42792:SF2">
    <property type="entry name" value="FLAGELLIN"/>
    <property type="match status" value="1"/>
</dbReference>
<dbReference type="Pfam" id="PF00700">
    <property type="entry name" value="Flagellin_C"/>
    <property type="match status" value="1"/>
</dbReference>
<dbReference type="Pfam" id="PF00669">
    <property type="entry name" value="Flagellin_N"/>
    <property type="match status" value="1"/>
</dbReference>
<dbReference type="Pfam" id="PF22370">
    <property type="entry name" value="FliC-like_3rd"/>
    <property type="match status" value="1"/>
</dbReference>
<dbReference type="PRINTS" id="PR00207">
    <property type="entry name" value="FLAGELLIN"/>
</dbReference>
<dbReference type="SUPFAM" id="SSF64518">
    <property type="entry name" value="Phase 1 flagellin"/>
    <property type="match status" value="1"/>
</dbReference>
<evidence type="ECO:0000250" key="1"/>
<evidence type="ECO:0000305" key="2"/>
<feature type="initiator methionine" description="Removed" evidence="1">
    <location>
        <position position="1"/>
    </location>
</feature>
<feature type="chain" id="PRO_0000182575" description="Flagellin">
    <location>
        <begin position="2"/>
        <end position="505"/>
    </location>
</feature>
<organism>
    <name type="scientific">Salmonella rostock</name>
    <dbReference type="NCBI Taxonomy" id="28149"/>
    <lineage>
        <taxon>Bacteria</taxon>
        <taxon>Pseudomonadati</taxon>
        <taxon>Pseudomonadota</taxon>
        <taxon>Gammaproteobacteria</taxon>
        <taxon>Enterobacterales</taxon>
        <taxon>Enterobacteriaceae</taxon>
        <taxon>Salmonella</taxon>
    </lineage>
</organism>
<keyword id="KW-0975">Bacterial flagellum</keyword>
<keyword id="KW-0964">Secreted</keyword>
<comment type="function">
    <text>Flagellin is the subunit protein which polymerizes to form the filaments of bacterial flagella.</text>
</comment>
<comment type="subcellular location">
    <subcellularLocation>
        <location>Secreted</location>
    </subcellularLocation>
    <subcellularLocation>
        <location>Bacterial flagellum</location>
    </subcellularLocation>
</comment>
<comment type="miscellaneous">
    <text>Individual Salmonella serotypes usually alternate between the production of 2 antigenic forms of flagella, termed phase 1 and phase 2, each specified by separate structural genes.</text>
</comment>
<comment type="similarity">
    <text evidence="2">Belongs to the bacterial flagellin family.</text>
</comment>
<proteinExistence type="inferred from homology"/>
<accession>Q06982</accession>
<reference key="1">
    <citation type="journal article" date="1993" name="J. Bacteriol.">
        <title>Molecular analyses of the Salmonella g. flagellar antigen complex.</title>
        <authorList>
            <person name="Masten B.J."/>
            <person name="Joys T.M."/>
        </authorList>
    </citation>
    <scope>NUCLEOTIDE SEQUENCE [GENOMIC DNA]</scope>
    <source>
        <strain>CDC</strain>
    </source>
</reference>